<dbReference type="EMBL" id="U12141">
    <property type="protein sequence ID" value="AAA99653.1"/>
    <property type="molecule type" value="Genomic_DNA"/>
</dbReference>
<dbReference type="EMBL" id="Z71334">
    <property type="protein sequence ID" value="CAA95932.1"/>
    <property type="molecule type" value="Genomic_DNA"/>
</dbReference>
<dbReference type="EMBL" id="AY692736">
    <property type="protein sequence ID" value="AAT92755.1"/>
    <property type="molecule type" value="Genomic_DNA"/>
</dbReference>
<dbReference type="EMBL" id="BK006947">
    <property type="protein sequence ID" value="DAA10487.1"/>
    <property type="molecule type" value="Genomic_DNA"/>
</dbReference>
<dbReference type="PIR" id="S58719">
    <property type="entry name" value="S58719"/>
</dbReference>
<dbReference type="RefSeq" id="NP_014340.1">
    <property type="nucleotide sequence ID" value="NM_001182897.1"/>
</dbReference>
<dbReference type="BioGRID" id="35764">
    <property type="interactions" value="56"/>
</dbReference>
<dbReference type="DIP" id="DIP-4366N"/>
<dbReference type="FunCoup" id="P53947">
    <property type="interactions" value="93"/>
</dbReference>
<dbReference type="IntAct" id="P53947">
    <property type="interactions" value="9"/>
</dbReference>
<dbReference type="MINT" id="P53947"/>
<dbReference type="STRING" id="4932.YNL058C"/>
<dbReference type="iPTMnet" id="P53947"/>
<dbReference type="PaxDb" id="4932-YNL058C"/>
<dbReference type="PeptideAtlas" id="P53947"/>
<dbReference type="EnsemblFungi" id="YNL058C_mRNA">
    <property type="protein sequence ID" value="YNL058C"/>
    <property type="gene ID" value="YNL058C"/>
</dbReference>
<dbReference type="GeneID" id="855667"/>
<dbReference type="KEGG" id="sce:YNL058C"/>
<dbReference type="AGR" id="SGD:S000005003"/>
<dbReference type="SGD" id="S000005003">
    <property type="gene designation" value="YNL058C"/>
</dbReference>
<dbReference type="VEuPathDB" id="FungiDB:YNL058C"/>
<dbReference type="eggNOG" id="ENOG502S625">
    <property type="taxonomic scope" value="Eukaryota"/>
</dbReference>
<dbReference type="GeneTree" id="ENSGT00940000176521"/>
<dbReference type="HOGENOM" id="CLU_061224_0_0_1"/>
<dbReference type="InParanoid" id="P53947"/>
<dbReference type="OMA" id="MEGYHKR"/>
<dbReference type="OrthoDB" id="4065319at2759"/>
<dbReference type="BioCyc" id="YEAST:G3O-33089-MONOMER"/>
<dbReference type="BioGRID-ORCS" id="855667">
    <property type="hits" value="0 hits in 10 CRISPR screens"/>
</dbReference>
<dbReference type="PRO" id="PR:P53947"/>
<dbReference type="Proteomes" id="UP000002311">
    <property type="component" value="Chromosome XIV"/>
</dbReference>
<dbReference type="RNAct" id="P53947">
    <property type="molecule type" value="protein"/>
</dbReference>
<dbReference type="GO" id="GO:0005935">
    <property type="term" value="C:cellular bud neck"/>
    <property type="evidence" value="ECO:0000318"/>
    <property type="project" value="GO_Central"/>
</dbReference>
<dbReference type="GO" id="GO:0005783">
    <property type="term" value="C:endoplasmic reticulum"/>
    <property type="evidence" value="ECO:0007005"/>
    <property type="project" value="SGD"/>
</dbReference>
<dbReference type="GO" id="GO:0000324">
    <property type="term" value="C:fungal-type vacuole"/>
    <property type="evidence" value="ECO:0007005"/>
    <property type="project" value="SGD"/>
</dbReference>
<dbReference type="GO" id="GO:0005774">
    <property type="term" value="C:vacuolar membrane"/>
    <property type="evidence" value="ECO:0007669"/>
    <property type="project" value="UniProtKB-SubCell"/>
</dbReference>
<dbReference type="InterPro" id="IPR051009">
    <property type="entry name" value="PRM"/>
</dbReference>
<dbReference type="PANTHER" id="PTHR36089">
    <property type="entry name" value="CHITIN SYNTHASE 3 COMPLEX PROTEIN CSI2-RELATED"/>
    <property type="match status" value="1"/>
</dbReference>
<dbReference type="PANTHER" id="PTHR36089:SF1">
    <property type="entry name" value="CHITIN SYNTHASE 3 COMPLEX PROTEIN CSI2-RELATED"/>
    <property type="match status" value="1"/>
</dbReference>
<evidence type="ECO:0000255" key="1"/>
<evidence type="ECO:0000256" key="2">
    <source>
        <dbReference type="SAM" id="MobiDB-lite"/>
    </source>
</evidence>
<evidence type="ECO:0000269" key="3">
    <source>
    </source>
</evidence>
<evidence type="ECO:0000305" key="4"/>
<evidence type="ECO:0007744" key="5">
    <source>
    </source>
</evidence>
<evidence type="ECO:0007744" key="6">
    <source>
    </source>
</evidence>
<keyword id="KW-0472">Membrane</keyword>
<keyword id="KW-0597">Phosphoprotein</keyword>
<keyword id="KW-1185">Reference proteome</keyword>
<keyword id="KW-0812">Transmembrane</keyword>
<keyword id="KW-1133">Transmembrane helix</keyword>
<keyword id="KW-0926">Vacuole</keyword>
<organism>
    <name type="scientific">Saccharomyces cerevisiae (strain ATCC 204508 / S288c)</name>
    <name type="common">Baker's yeast</name>
    <dbReference type="NCBI Taxonomy" id="559292"/>
    <lineage>
        <taxon>Eukaryota</taxon>
        <taxon>Fungi</taxon>
        <taxon>Dikarya</taxon>
        <taxon>Ascomycota</taxon>
        <taxon>Saccharomycotina</taxon>
        <taxon>Saccharomycetes</taxon>
        <taxon>Saccharomycetales</taxon>
        <taxon>Saccharomycetaceae</taxon>
        <taxon>Saccharomyces</taxon>
    </lineage>
</organism>
<proteinExistence type="evidence at protein level"/>
<reference key="1">
    <citation type="journal article" date="1995" name="Yeast">
        <title>The sequence of a 44 420 bp fragment located on the left arm of chromosome XIV from Saccharomyces cerevisiae.</title>
        <authorList>
            <person name="Bergez P."/>
            <person name="Doignon F."/>
            <person name="Crouzet M."/>
        </authorList>
    </citation>
    <scope>NUCLEOTIDE SEQUENCE [GENOMIC DNA]</scope>
    <source>
        <strain>S288c / FY1676</strain>
    </source>
</reference>
<reference key="2">
    <citation type="journal article" date="1996" name="Yeast">
        <authorList>
            <person name="Bergez P."/>
            <person name="Doignon F."/>
            <person name="Crouzet M."/>
        </authorList>
    </citation>
    <scope>ERRATUM OF PUBMED:8533472</scope>
</reference>
<reference key="3">
    <citation type="journal article" date="1997" name="Nature">
        <title>The nucleotide sequence of Saccharomyces cerevisiae chromosome XIV and its evolutionary implications.</title>
        <authorList>
            <person name="Philippsen P."/>
            <person name="Kleine K."/>
            <person name="Poehlmann R."/>
            <person name="Duesterhoeft A."/>
            <person name="Hamberg K."/>
            <person name="Hegemann J.H."/>
            <person name="Obermaier B."/>
            <person name="Urrestarazu L.A."/>
            <person name="Aert R."/>
            <person name="Albermann K."/>
            <person name="Altmann R."/>
            <person name="Andre B."/>
            <person name="Baladron V."/>
            <person name="Ballesta J.P.G."/>
            <person name="Becam A.-M."/>
            <person name="Beinhauer J.D."/>
            <person name="Boskovic J."/>
            <person name="Buitrago M.J."/>
            <person name="Bussereau F."/>
            <person name="Coster F."/>
            <person name="Crouzet M."/>
            <person name="D'Angelo M."/>
            <person name="Dal Pero F."/>
            <person name="De Antoni A."/>
            <person name="del Rey F."/>
            <person name="Doignon F."/>
            <person name="Domdey H."/>
            <person name="Dubois E."/>
            <person name="Fiedler T.A."/>
            <person name="Fleig U."/>
            <person name="Floeth M."/>
            <person name="Fritz C."/>
            <person name="Gaillardin C."/>
            <person name="Garcia-Cantalejo J.M."/>
            <person name="Glansdorff N."/>
            <person name="Goffeau A."/>
            <person name="Gueldener U."/>
            <person name="Herbert C.J."/>
            <person name="Heumann K."/>
            <person name="Heuss-Neitzel D."/>
            <person name="Hilbert H."/>
            <person name="Hinni K."/>
            <person name="Iraqui Houssaini I."/>
            <person name="Jacquet M."/>
            <person name="Jimenez A."/>
            <person name="Jonniaux J.-L."/>
            <person name="Karpfinger-Hartl L."/>
            <person name="Lanfranchi G."/>
            <person name="Lepingle A."/>
            <person name="Levesque H."/>
            <person name="Lyck R."/>
            <person name="Maftahi M."/>
            <person name="Mallet L."/>
            <person name="Maurer C.T.C."/>
            <person name="Messenguy F."/>
            <person name="Mewes H.-W."/>
            <person name="Moestl D."/>
            <person name="Nasr F."/>
            <person name="Nicaud J.-M."/>
            <person name="Niedenthal R.K."/>
            <person name="Pandolfo D."/>
            <person name="Pierard A."/>
            <person name="Piravandi E."/>
            <person name="Planta R.J."/>
            <person name="Pohl T.M."/>
            <person name="Purnelle B."/>
            <person name="Rebischung C."/>
            <person name="Remacha M.A."/>
            <person name="Revuelta J.L."/>
            <person name="Rinke M."/>
            <person name="Saiz J.E."/>
            <person name="Sartorello F."/>
            <person name="Scherens B."/>
            <person name="Sen-Gupta M."/>
            <person name="Soler-Mira A."/>
            <person name="Urbanus J.H.M."/>
            <person name="Valle G."/>
            <person name="Van Dyck L."/>
            <person name="Verhasselt P."/>
            <person name="Vierendeels F."/>
            <person name="Vissers S."/>
            <person name="Voet M."/>
            <person name="Volckaert G."/>
            <person name="Wach A."/>
            <person name="Wambutt R."/>
            <person name="Wedler H."/>
            <person name="Zollner A."/>
            <person name="Hani J."/>
        </authorList>
    </citation>
    <scope>NUCLEOTIDE SEQUENCE [LARGE SCALE GENOMIC DNA]</scope>
    <source>
        <strain>ATCC 204508 / S288c</strain>
    </source>
</reference>
<reference key="4">
    <citation type="journal article" date="2014" name="G3 (Bethesda)">
        <title>The reference genome sequence of Saccharomyces cerevisiae: Then and now.</title>
        <authorList>
            <person name="Engel S.R."/>
            <person name="Dietrich F.S."/>
            <person name="Fisk D.G."/>
            <person name="Binkley G."/>
            <person name="Balakrishnan R."/>
            <person name="Costanzo M.C."/>
            <person name="Dwight S.S."/>
            <person name="Hitz B.C."/>
            <person name="Karra K."/>
            <person name="Nash R.S."/>
            <person name="Weng S."/>
            <person name="Wong E.D."/>
            <person name="Lloyd P."/>
            <person name="Skrzypek M.S."/>
            <person name="Miyasato S.R."/>
            <person name="Simison M."/>
            <person name="Cherry J.M."/>
        </authorList>
    </citation>
    <scope>GENOME REANNOTATION</scope>
    <source>
        <strain>ATCC 204508 / S288c</strain>
    </source>
</reference>
<reference key="5">
    <citation type="journal article" date="2007" name="Genome Res.">
        <title>Approaching a complete repository of sequence-verified protein-encoding clones for Saccharomyces cerevisiae.</title>
        <authorList>
            <person name="Hu Y."/>
            <person name="Rolfs A."/>
            <person name="Bhullar B."/>
            <person name="Murthy T.V.S."/>
            <person name="Zhu C."/>
            <person name="Berger M.F."/>
            <person name="Camargo A.A."/>
            <person name="Kelley F."/>
            <person name="McCarron S."/>
            <person name="Jepson D."/>
            <person name="Richardson A."/>
            <person name="Raphael J."/>
            <person name="Moreira D."/>
            <person name="Taycher E."/>
            <person name="Zuo D."/>
            <person name="Mohr S."/>
            <person name="Kane M.F."/>
            <person name="Williamson J."/>
            <person name="Simpson A.J.G."/>
            <person name="Bulyk M.L."/>
            <person name="Harlow E."/>
            <person name="Marsischky G."/>
            <person name="Kolodner R.D."/>
            <person name="LaBaer J."/>
        </authorList>
    </citation>
    <scope>NUCLEOTIDE SEQUENCE [GENOMIC DNA]</scope>
    <source>
        <strain>ATCC 204508 / S288c</strain>
    </source>
</reference>
<reference key="6">
    <citation type="journal article" date="2003" name="Nature">
        <title>Global analysis of protein localization in budding yeast.</title>
        <authorList>
            <person name="Huh W.-K."/>
            <person name="Falvo J.V."/>
            <person name="Gerke L.C."/>
            <person name="Carroll A.S."/>
            <person name="Howson R.W."/>
            <person name="Weissman J.S."/>
            <person name="O'Shea E.K."/>
        </authorList>
    </citation>
    <scope>SUBCELLULAR LOCATION [LARGE SCALE ANALYSIS]</scope>
</reference>
<reference key="7">
    <citation type="journal article" date="2007" name="Proc. Natl. Acad. Sci. U.S.A.">
        <title>Analysis of phosphorylation sites on proteins from Saccharomyces cerevisiae by electron transfer dissociation (ETD) mass spectrometry.</title>
        <authorList>
            <person name="Chi A."/>
            <person name="Huttenhower C."/>
            <person name="Geer L.Y."/>
            <person name="Coon J.J."/>
            <person name="Syka J.E.P."/>
            <person name="Bai D.L."/>
            <person name="Shabanowitz J."/>
            <person name="Burke D.J."/>
            <person name="Troyanskaya O.G."/>
            <person name="Hunt D.F."/>
        </authorList>
    </citation>
    <scope>PHOSPHORYLATION [LARGE SCALE ANALYSIS] AT SER-256</scope>
    <scope>IDENTIFICATION BY MASS SPECTROMETRY [LARGE SCALE ANALYSIS]</scope>
</reference>
<reference key="8">
    <citation type="journal article" date="2009" name="Science">
        <title>Global analysis of Cdk1 substrate phosphorylation sites provides insights into evolution.</title>
        <authorList>
            <person name="Holt L.J."/>
            <person name="Tuch B.B."/>
            <person name="Villen J."/>
            <person name="Johnson A.D."/>
            <person name="Gygi S.P."/>
            <person name="Morgan D.O."/>
        </authorList>
    </citation>
    <scope>PHOSPHORYLATION [LARGE SCALE ANALYSIS] AT SER-148 AND SER-276</scope>
    <scope>IDENTIFICATION BY MASS SPECTROMETRY [LARGE SCALE ANALYSIS]</scope>
</reference>
<accession>P53947</accession>
<accession>D6W1C1</accession>
<gene>
    <name type="ordered locus">YNL058C</name>
    <name type="ORF">N2433</name>
    <name type="ORF">YNL2433C</name>
</gene>
<protein>
    <recommendedName>
        <fullName>Vacuolar membrane protein YNL058C</fullName>
    </recommendedName>
</protein>
<feature type="chain" id="PRO_0000203449" description="Vacuolar membrane protein YNL058C">
    <location>
        <begin position="1"/>
        <end position="316"/>
    </location>
</feature>
<feature type="transmembrane region" description="Helical" evidence="1">
    <location>
        <begin position="93"/>
        <end position="113"/>
    </location>
</feature>
<feature type="region of interest" description="Disordered" evidence="2">
    <location>
        <begin position="32"/>
        <end position="60"/>
    </location>
</feature>
<feature type="region of interest" description="Disordered" evidence="2">
    <location>
        <begin position="240"/>
        <end position="304"/>
    </location>
</feature>
<feature type="compositionally biased region" description="Basic and acidic residues" evidence="2">
    <location>
        <begin position="256"/>
        <end position="271"/>
    </location>
</feature>
<feature type="modified residue" description="Phosphoserine" evidence="6">
    <location>
        <position position="148"/>
    </location>
</feature>
<feature type="modified residue" description="Phosphoserine" evidence="5">
    <location>
        <position position="256"/>
    </location>
</feature>
<feature type="modified residue" description="Phosphoserine" evidence="6">
    <location>
        <position position="276"/>
    </location>
</feature>
<comment type="subcellular location">
    <subcellularLocation>
        <location evidence="3">Vacuole membrane</location>
        <topology evidence="3">Single-pass membrane protein</topology>
    </subcellularLocation>
</comment>
<comment type="similarity">
    <text evidence="4">Belongs to the PRM5 family.</text>
</comment>
<sequence length="316" mass="35046">MVKKNFIPSVSLVRRDLPTLVTTTTSSTALSKPTSSVVSETSSKSLPSLTSSAFSTSSGATSSSSLIVASITPPSTAGNPFILNAADKPNGTVYIAVGAVIGAIFISILIWWLVSSYLSRRFTMTNSYANDSKNLYRGHHKHSSSLQSNPFDINDEKSYMQDDWDSMSQLESSQYEDAASPFNPIQDPFTDNRRSLFISPTLQVSQYEKSHSRHQSKDTNIFIDDPFLYVGTYLEEEEEEEEERKLNLNRPQRAASPERKEKKINSMEGYHKRNQSSLGLIPVASATSNTSSPKKAHKRQAPSMFLDDVLNGREII</sequence>
<name>YNF8_YEAST</name>